<reference key="1">
    <citation type="journal article" date="1989" name="J. Biol. Chem.">
        <title>cGMP-dependent protein kinase genes in Drosophila.</title>
        <authorList>
            <person name="Kalderon D."/>
            <person name="Rubin G.M."/>
        </authorList>
    </citation>
    <scope>NUCLEOTIDE SEQUENCE [GENOMIC DNA / MRNA] (ISOFORMS T1 AND T3B)</scope>
    <scope>DEVELOPMENTAL STAGE</scope>
    <source>
        <strain>Canton-S</strain>
        <tissue>Imaginal disk</tissue>
    </source>
</reference>
<reference key="2">
    <citation type="journal article" date="2000" name="Science">
        <title>The genome sequence of Drosophila melanogaster.</title>
        <authorList>
            <person name="Adams M.D."/>
            <person name="Celniker S.E."/>
            <person name="Holt R.A."/>
            <person name="Evans C.A."/>
            <person name="Gocayne J.D."/>
            <person name="Amanatides P.G."/>
            <person name="Scherer S.E."/>
            <person name="Li P.W."/>
            <person name="Hoskins R.A."/>
            <person name="Galle R.F."/>
            <person name="George R.A."/>
            <person name="Lewis S.E."/>
            <person name="Richards S."/>
            <person name="Ashburner M."/>
            <person name="Henderson S.N."/>
            <person name="Sutton G.G."/>
            <person name="Wortman J.R."/>
            <person name="Yandell M.D."/>
            <person name="Zhang Q."/>
            <person name="Chen L.X."/>
            <person name="Brandon R.C."/>
            <person name="Rogers Y.-H.C."/>
            <person name="Blazej R.G."/>
            <person name="Champe M."/>
            <person name="Pfeiffer B.D."/>
            <person name="Wan K.H."/>
            <person name="Doyle C."/>
            <person name="Baxter E.G."/>
            <person name="Helt G."/>
            <person name="Nelson C.R."/>
            <person name="Miklos G.L.G."/>
            <person name="Abril J.F."/>
            <person name="Agbayani A."/>
            <person name="An H.-J."/>
            <person name="Andrews-Pfannkoch C."/>
            <person name="Baldwin D."/>
            <person name="Ballew R.M."/>
            <person name="Basu A."/>
            <person name="Baxendale J."/>
            <person name="Bayraktaroglu L."/>
            <person name="Beasley E.M."/>
            <person name="Beeson K.Y."/>
            <person name="Benos P.V."/>
            <person name="Berman B.P."/>
            <person name="Bhandari D."/>
            <person name="Bolshakov S."/>
            <person name="Borkova D."/>
            <person name="Botchan M.R."/>
            <person name="Bouck J."/>
            <person name="Brokstein P."/>
            <person name="Brottier P."/>
            <person name="Burtis K.C."/>
            <person name="Busam D.A."/>
            <person name="Butler H."/>
            <person name="Cadieu E."/>
            <person name="Center A."/>
            <person name="Chandra I."/>
            <person name="Cherry J.M."/>
            <person name="Cawley S."/>
            <person name="Dahlke C."/>
            <person name="Davenport L.B."/>
            <person name="Davies P."/>
            <person name="de Pablos B."/>
            <person name="Delcher A."/>
            <person name="Deng Z."/>
            <person name="Mays A.D."/>
            <person name="Dew I."/>
            <person name="Dietz S.M."/>
            <person name="Dodson K."/>
            <person name="Doup L.E."/>
            <person name="Downes M."/>
            <person name="Dugan-Rocha S."/>
            <person name="Dunkov B.C."/>
            <person name="Dunn P."/>
            <person name="Durbin K.J."/>
            <person name="Evangelista C.C."/>
            <person name="Ferraz C."/>
            <person name="Ferriera S."/>
            <person name="Fleischmann W."/>
            <person name="Fosler C."/>
            <person name="Gabrielian A.E."/>
            <person name="Garg N.S."/>
            <person name="Gelbart W.M."/>
            <person name="Glasser K."/>
            <person name="Glodek A."/>
            <person name="Gong F."/>
            <person name="Gorrell J.H."/>
            <person name="Gu Z."/>
            <person name="Guan P."/>
            <person name="Harris M."/>
            <person name="Harris N.L."/>
            <person name="Harvey D.A."/>
            <person name="Heiman T.J."/>
            <person name="Hernandez J.R."/>
            <person name="Houck J."/>
            <person name="Hostin D."/>
            <person name="Houston K.A."/>
            <person name="Howland T.J."/>
            <person name="Wei M.-H."/>
            <person name="Ibegwam C."/>
            <person name="Jalali M."/>
            <person name="Kalush F."/>
            <person name="Karpen G.H."/>
            <person name="Ke Z."/>
            <person name="Kennison J.A."/>
            <person name="Ketchum K.A."/>
            <person name="Kimmel B.E."/>
            <person name="Kodira C.D."/>
            <person name="Kraft C.L."/>
            <person name="Kravitz S."/>
            <person name="Kulp D."/>
            <person name="Lai Z."/>
            <person name="Lasko P."/>
            <person name="Lei Y."/>
            <person name="Levitsky A.A."/>
            <person name="Li J.H."/>
            <person name="Li Z."/>
            <person name="Liang Y."/>
            <person name="Lin X."/>
            <person name="Liu X."/>
            <person name="Mattei B."/>
            <person name="McIntosh T.C."/>
            <person name="McLeod M.P."/>
            <person name="McPherson D."/>
            <person name="Merkulov G."/>
            <person name="Milshina N.V."/>
            <person name="Mobarry C."/>
            <person name="Morris J."/>
            <person name="Moshrefi A."/>
            <person name="Mount S.M."/>
            <person name="Moy M."/>
            <person name="Murphy B."/>
            <person name="Murphy L."/>
            <person name="Muzny D.M."/>
            <person name="Nelson D.L."/>
            <person name="Nelson D.R."/>
            <person name="Nelson K.A."/>
            <person name="Nixon K."/>
            <person name="Nusskern D.R."/>
            <person name="Pacleb J.M."/>
            <person name="Palazzolo M."/>
            <person name="Pittman G.S."/>
            <person name="Pan S."/>
            <person name="Pollard J."/>
            <person name="Puri V."/>
            <person name="Reese M.G."/>
            <person name="Reinert K."/>
            <person name="Remington K."/>
            <person name="Saunders R.D.C."/>
            <person name="Scheeler F."/>
            <person name="Shen H."/>
            <person name="Shue B.C."/>
            <person name="Siden-Kiamos I."/>
            <person name="Simpson M."/>
            <person name="Skupski M.P."/>
            <person name="Smith T.J."/>
            <person name="Spier E."/>
            <person name="Spradling A.C."/>
            <person name="Stapleton M."/>
            <person name="Strong R."/>
            <person name="Sun E."/>
            <person name="Svirskas R."/>
            <person name="Tector C."/>
            <person name="Turner R."/>
            <person name="Venter E."/>
            <person name="Wang A.H."/>
            <person name="Wang X."/>
            <person name="Wang Z.-Y."/>
            <person name="Wassarman D.A."/>
            <person name="Weinstock G.M."/>
            <person name="Weissenbach J."/>
            <person name="Williams S.M."/>
            <person name="Woodage T."/>
            <person name="Worley K.C."/>
            <person name="Wu D."/>
            <person name="Yang S."/>
            <person name="Yao Q.A."/>
            <person name="Ye J."/>
            <person name="Yeh R.-F."/>
            <person name="Zaveri J.S."/>
            <person name="Zhan M."/>
            <person name="Zhang G."/>
            <person name="Zhao Q."/>
            <person name="Zheng L."/>
            <person name="Zheng X.H."/>
            <person name="Zhong F.N."/>
            <person name="Zhong W."/>
            <person name="Zhou X."/>
            <person name="Zhu S.C."/>
            <person name="Zhu X."/>
            <person name="Smith H.O."/>
            <person name="Gibbs R.A."/>
            <person name="Myers E.W."/>
            <person name="Rubin G.M."/>
            <person name="Venter J.C."/>
        </authorList>
    </citation>
    <scope>NUCLEOTIDE SEQUENCE [LARGE SCALE GENOMIC DNA]</scope>
    <source>
        <strain>Berkeley</strain>
    </source>
</reference>
<reference key="3">
    <citation type="journal article" date="2002" name="Genome Biol.">
        <title>Annotation of the Drosophila melanogaster euchromatic genome: a systematic review.</title>
        <authorList>
            <person name="Misra S."/>
            <person name="Crosby M.A."/>
            <person name="Mungall C.J."/>
            <person name="Matthews B.B."/>
            <person name="Campbell K.S."/>
            <person name="Hradecky P."/>
            <person name="Huang Y."/>
            <person name="Kaminker J.S."/>
            <person name="Millburn G.H."/>
            <person name="Prochnik S.E."/>
            <person name="Smith C.D."/>
            <person name="Tupy J.L."/>
            <person name="Whitfield E.J."/>
            <person name="Bayraktaroglu L."/>
            <person name="Berman B.P."/>
            <person name="Bettencourt B.R."/>
            <person name="Celniker S.E."/>
            <person name="de Grey A.D.N.J."/>
            <person name="Drysdale R.A."/>
            <person name="Harris N.L."/>
            <person name="Richter J."/>
            <person name="Russo S."/>
            <person name="Schroeder A.J."/>
            <person name="Shu S.Q."/>
            <person name="Stapleton M."/>
            <person name="Yamada C."/>
            <person name="Ashburner M."/>
            <person name="Gelbart W.M."/>
            <person name="Rubin G.M."/>
            <person name="Lewis S.E."/>
        </authorList>
    </citation>
    <scope>GENOME REANNOTATION</scope>
    <source>
        <strain>Berkeley</strain>
    </source>
</reference>
<reference key="4">
    <citation type="journal article" date="2002" name="Genome Biol.">
        <title>A Drosophila full-length cDNA resource.</title>
        <authorList>
            <person name="Stapleton M."/>
            <person name="Carlson J.W."/>
            <person name="Brokstein P."/>
            <person name="Yu C."/>
            <person name="Champe M."/>
            <person name="George R.A."/>
            <person name="Guarin H."/>
            <person name="Kronmiller B."/>
            <person name="Pacleb J.M."/>
            <person name="Park S."/>
            <person name="Wan K.H."/>
            <person name="Rubin G.M."/>
            <person name="Celniker S.E."/>
        </authorList>
    </citation>
    <scope>NUCLEOTIDE SEQUENCE [LARGE SCALE MRNA] (ISOFORM T1)</scope>
    <source>
        <strain>Berkeley</strain>
        <tissue>Embryo</tissue>
    </source>
</reference>
<reference key="5">
    <citation type="journal article" date="2008" name="J. Proteome Res.">
        <title>Phosphoproteome analysis of Drosophila melanogaster embryos.</title>
        <authorList>
            <person name="Zhai B."/>
            <person name="Villen J."/>
            <person name="Beausoleil S.A."/>
            <person name="Mintseris J."/>
            <person name="Gygi S.P."/>
        </authorList>
    </citation>
    <scope>PHOSPHORYLATION [LARGE SCALE ANALYSIS] AT THR-934 AND THR-938</scope>
    <scope>IDENTIFICATION BY MASS SPECTROMETRY</scope>
    <source>
        <tissue>Embryo</tissue>
    </source>
</reference>
<protein>
    <recommendedName>
        <fullName>cGMP-dependent protein kinase, isozyme 2 forms cD4/T1/T3A/T3B</fullName>
        <shortName>cGK</shortName>
        <ecNumber>2.7.11.12</ecNumber>
    </recommendedName>
    <alternativeName>
        <fullName>Foraging protein</fullName>
    </alternativeName>
</protein>
<proteinExistence type="evidence at protein level"/>
<sequence length="1088" mass="121341">MRFCFDRLCFATKRPAQNSNSNAPHSSTTVDAPPRPADVDVATVPVATPAPPPQQPVSNLFYADYQKLQPAIIDRDWERDRDTDTDTRSEAKPPDIVEHIEPVEEQRQIHTQIQSPAEIQIQIPPTPPAPSIQIQIQQRYRRHSSAEDRNLNTRRNDSNITEALRKAASMQQEPNANYQFPTDLGLVSIVNNNNNTNTHPSGSNSGSNNNSNINNNLVGGIVTLPAAGGLIGLEHTASGLRLIPAPPTHSDVLTHTLIYGTPPSGAQQLNQDPRSLLHQQELQLQQRYQQLQQLQAQTQGLYTSQGSPVLYHQPSPGSSQPVAIPGATCHSPTQLQPPNTLNLQQQMQSLRISGCTPSGTGGSATPSPVGLVDPNFIVSNYVAASPQEERFIQIIQAKELKIQEMQRALQFKDNEIAELKSHLDKFQSVFPFSRGSAAGCAGTGGASGSGAGGSGGSGPGTATGATRKSGQNFQRQRALGISAEPQSESSLLLEHVSFPKYDKDERSRELIKAAILDNDFMKNLDLTQIREIVDCMYPVKYPAKNLIIKEGDVGSIVYVMEDGRVEVSREGKYLSTLSGAKVLGELAILYNCQRTATITAITECNLWAIERQCFQTIMMRTGLIRQAEYSDFLKSVPIFKDLAEDTLIKISDVLEETHYQRGDYIVRQGARGDTFFIISKGKVRVTIKQQDTQEEKFIRMLGKGDFFGEKALQGDDLRTANIICESADGVSCLVIDRETFNQLISNLDEIKHRYDDEGAMERRKINEEFRDINLTDLRVIATLGVGGFGRVELVQTNGDSSRSFALKQMKKSQIVETRQQQHIMSEKEIMGEANCQFIVKLFKTFKDKKYLYMLMESCLGGELWTILRDKGNFDDSTTRFYTACVVEAFDYLHSRNIIYRDLKPENLLLNERGYVKLVDFGFAKKLQTGRKTWTFCGTPEYVAPEVILNRGHDISADYWSLGVLMFELLTGTPPFTGSDPMRTYNIILKGIDAIEFPRNITRNASNLIKKLCRDNPAERLGYQRGGISEIQKHKWFDGFYWWGLQNCTLEPPIKPAVKSVVDTTNFDDYPPDPEGPPPDDVTGWDKDF</sequence>
<dbReference type="EC" id="2.7.11.12"/>
<dbReference type="EMBL" id="M27120">
    <property type="protein sequence ID" value="AAA28455.1"/>
    <property type="molecule type" value="Genomic_DNA"/>
</dbReference>
<dbReference type="EMBL" id="M27117">
    <property type="protein sequence ID" value="AAA28455.1"/>
    <property type="status" value="JOINED"/>
    <property type="molecule type" value="Genomic_DNA"/>
</dbReference>
<dbReference type="EMBL" id="M27118">
    <property type="protein sequence ID" value="AAA28455.1"/>
    <property type="status" value="JOINED"/>
    <property type="molecule type" value="Genomic_DNA"/>
</dbReference>
<dbReference type="EMBL" id="M27119">
    <property type="protein sequence ID" value="AAA28455.1"/>
    <property type="status" value="JOINED"/>
    <property type="molecule type" value="Genomic_DNA"/>
</dbReference>
<dbReference type="EMBL" id="M30413">
    <property type="protein sequence ID" value="AAA28459.1"/>
    <property type="molecule type" value="mRNA"/>
</dbReference>
<dbReference type="EMBL" id="AE014134">
    <property type="protein sequence ID" value="AAF51082.2"/>
    <property type="molecule type" value="Genomic_DNA"/>
</dbReference>
<dbReference type="EMBL" id="AE014134">
    <property type="protein sequence ID" value="AAS64613.1"/>
    <property type="molecule type" value="Genomic_DNA"/>
</dbReference>
<dbReference type="EMBL" id="AE014134">
    <property type="protein sequence ID" value="AAS64614.1"/>
    <property type="molecule type" value="Genomic_DNA"/>
</dbReference>
<dbReference type="EMBL" id="AY061514">
    <property type="protein sequence ID" value="AAL29062.1"/>
    <property type="molecule type" value="mRNA"/>
</dbReference>
<dbReference type="PIR" id="B34106">
    <property type="entry name" value="B34106"/>
</dbReference>
<dbReference type="RefSeq" id="NP_001334731.1">
    <molecule id="Q03043-3"/>
    <property type="nucleotide sequence ID" value="NM_001347740.1"/>
</dbReference>
<dbReference type="RefSeq" id="NP_001356892.1">
    <molecule id="Q03043-4"/>
    <property type="nucleotide sequence ID" value="NM_001369953.1"/>
</dbReference>
<dbReference type="RefSeq" id="NP_001356896.1">
    <molecule id="Q03043-4"/>
    <property type="nucleotide sequence ID" value="NM_001369954.1"/>
</dbReference>
<dbReference type="RefSeq" id="NP_477487.1">
    <molecule id="Q03043-1"/>
    <property type="nucleotide sequence ID" value="NM_058139.4"/>
</dbReference>
<dbReference type="RefSeq" id="NP_995626.1">
    <molecule id="Q03043-1"/>
    <property type="nucleotide sequence ID" value="NM_205904.2"/>
</dbReference>
<dbReference type="RefSeq" id="NP_995628.1">
    <molecule id="Q03043-1"/>
    <property type="nucleotide sequence ID" value="NM_205906.2"/>
</dbReference>
<dbReference type="SMR" id="Q03043"/>
<dbReference type="BioGRID" id="69303">
    <property type="interactions" value="13"/>
</dbReference>
<dbReference type="FunCoup" id="Q03043">
    <property type="interactions" value="393"/>
</dbReference>
<dbReference type="STRING" id="7227.FBpp0088350"/>
<dbReference type="GlyGen" id="Q03043">
    <property type="glycosylation" value="3 sites"/>
</dbReference>
<dbReference type="iPTMnet" id="Q03043"/>
<dbReference type="PaxDb" id="7227-FBpp0088350"/>
<dbReference type="DNASU" id="44817"/>
<dbReference type="EnsemblMetazoa" id="FBtr0089304">
    <molecule id="Q03043-1"/>
    <property type="protein sequence ID" value="FBpp0088350"/>
    <property type="gene ID" value="FBgn0000721"/>
</dbReference>
<dbReference type="EnsemblMetazoa" id="FBtr0089310">
    <molecule id="Q03043-1"/>
    <property type="protein sequence ID" value="FBpp0088922"/>
    <property type="gene ID" value="FBgn0000721"/>
</dbReference>
<dbReference type="EnsemblMetazoa" id="FBtr0089312">
    <molecule id="Q03043-1"/>
    <property type="protein sequence ID" value="FBpp0088923"/>
    <property type="gene ID" value="FBgn0000721"/>
</dbReference>
<dbReference type="EnsemblMetazoa" id="FBtr0446099">
    <molecule id="Q03043-3"/>
    <property type="protein sequence ID" value="FBpp0402801"/>
    <property type="gene ID" value="FBgn0000721"/>
</dbReference>
<dbReference type="EnsemblMetazoa" id="FBtr0473363">
    <molecule id="Q03043-4"/>
    <property type="protein sequence ID" value="FBpp0422967"/>
    <property type="gene ID" value="FBgn0000721"/>
</dbReference>
<dbReference type="EnsemblMetazoa" id="FBtr0473364">
    <molecule id="Q03043-4"/>
    <property type="protein sequence ID" value="FBpp0422968"/>
    <property type="gene ID" value="FBgn0000721"/>
</dbReference>
<dbReference type="GeneID" id="44817"/>
<dbReference type="UCSC" id="CG10033-RA">
    <molecule id="Q03043-1"/>
    <property type="organism name" value="d. melanogaster"/>
</dbReference>
<dbReference type="AGR" id="FB:FBgn0000721"/>
<dbReference type="CTD" id="44817"/>
<dbReference type="FlyBase" id="FBgn0000721">
    <property type="gene designation" value="for"/>
</dbReference>
<dbReference type="VEuPathDB" id="VectorBase:FBgn0000721"/>
<dbReference type="eggNOG" id="KOG0614">
    <property type="taxonomic scope" value="Eukaryota"/>
</dbReference>
<dbReference type="eggNOG" id="KOG0616">
    <property type="taxonomic scope" value="Eukaryota"/>
</dbReference>
<dbReference type="HOGENOM" id="CLU_000288_73_6_1"/>
<dbReference type="InParanoid" id="Q03043"/>
<dbReference type="OMA" id="SGCTPGN"/>
<dbReference type="OrthoDB" id="63267at2759"/>
<dbReference type="PhylomeDB" id="Q03043"/>
<dbReference type="BRENDA" id="2.7.11.12">
    <property type="organism ID" value="1994"/>
</dbReference>
<dbReference type="Reactome" id="R-DME-392517">
    <property type="pathway name" value="Rap1 signalling"/>
</dbReference>
<dbReference type="BioGRID-ORCS" id="44817">
    <property type="hits" value="0 hits in 3 CRISPR screens"/>
</dbReference>
<dbReference type="ChiTaRS" id="for">
    <property type="organism name" value="fly"/>
</dbReference>
<dbReference type="GenomeRNAi" id="44817"/>
<dbReference type="Proteomes" id="UP000000803">
    <property type="component" value="Chromosome 2L"/>
</dbReference>
<dbReference type="Bgee" id="FBgn0000721">
    <property type="expression patterns" value="Expressed in spermathecum and 220 other cell types or tissues"/>
</dbReference>
<dbReference type="ExpressionAtlas" id="Q03043">
    <property type="expression patterns" value="baseline and differential"/>
</dbReference>
<dbReference type="GO" id="GO:0005829">
    <property type="term" value="C:cytosol"/>
    <property type="evidence" value="ECO:0000314"/>
    <property type="project" value="FlyBase"/>
</dbReference>
<dbReference type="GO" id="GO:0005886">
    <property type="term" value="C:plasma membrane"/>
    <property type="evidence" value="ECO:0000314"/>
    <property type="project" value="FlyBase"/>
</dbReference>
<dbReference type="GO" id="GO:0005524">
    <property type="term" value="F:ATP binding"/>
    <property type="evidence" value="ECO:0007669"/>
    <property type="project" value="UniProtKB-KW"/>
</dbReference>
<dbReference type="GO" id="GO:0030553">
    <property type="term" value="F:cGMP binding"/>
    <property type="evidence" value="ECO:0007669"/>
    <property type="project" value="UniProtKB-KW"/>
</dbReference>
<dbReference type="GO" id="GO:0004692">
    <property type="term" value="F:cGMP-dependent protein kinase activity"/>
    <property type="evidence" value="ECO:0000314"/>
    <property type="project" value="FlyBase"/>
</dbReference>
<dbReference type="GO" id="GO:0106310">
    <property type="term" value="F:protein serine kinase activity"/>
    <property type="evidence" value="ECO:0007669"/>
    <property type="project" value="RHEA"/>
</dbReference>
<dbReference type="GO" id="GO:0007631">
    <property type="term" value="P:feeding behavior"/>
    <property type="evidence" value="ECO:0000304"/>
    <property type="project" value="FlyBase"/>
</dbReference>
<dbReference type="GO" id="GO:0046959">
    <property type="term" value="P:habituation"/>
    <property type="evidence" value="ECO:0000315"/>
    <property type="project" value="FlyBase"/>
</dbReference>
<dbReference type="GO" id="GO:0030536">
    <property type="term" value="P:larval feeding behavior"/>
    <property type="evidence" value="ECO:0000315"/>
    <property type="project" value="UniProtKB"/>
</dbReference>
<dbReference type="GO" id="GO:0008345">
    <property type="term" value="P:larval locomotory behavior"/>
    <property type="evidence" value="ECO:0000315"/>
    <property type="project" value="FlyBase"/>
</dbReference>
<dbReference type="GO" id="GO:0007616">
    <property type="term" value="P:long-term memory"/>
    <property type="evidence" value="ECO:0000315"/>
    <property type="project" value="FlyBase"/>
</dbReference>
<dbReference type="GO" id="GO:0008045">
    <property type="term" value="P:motor neuron axon guidance"/>
    <property type="evidence" value="ECO:0000315"/>
    <property type="project" value="FlyBase"/>
</dbReference>
<dbReference type="GO" id="GO:0045752">
    <property type="term" value="P:positive regulation of Toll signaling pathway"/>
    <property type="evidence" value="ECO:0000316"/>
    <property type="project" value="FlyBase"/>
</dbReference>
<dbReference type="GO" id="GO:0006468">
    <property type="term" value="P:protein phosphorylation"/>
    <property type="evidence" value="ECO:0000314"/>
    <property type="project" value="UniProtKB"/>
</dbReference>
<dbReference type="GO" id="GO:0007168">
    <property type="term" value="P:receptor guanylyl cyclase signaling pathway"/>
    <property type="evidence" value="ECO:0000315"/>
    <property type="project" value="FlyBase"/>
</dbReference>
<dbReference type="GO" id="GO:0008016">
    <property type="term" value="P:regulation of heart contraction"/>
    <property type="evidence" value="ECO:0000315"/>
    <property type="project" value="FlyBase"/>
</dbReference>
<dbReference type="GO" id="GO:0032095">
    <property type="term" value="P:regulation of response to food"/>
    <property type="evidence" value="ECO:0000315"/>
    <property type="project" value="FlyBase"/>
</dbReference>
<dbReference type="GO" id="GO:0009744">
    <property type="term" value="P:response to sucrose"/>
    <property type="evidence" value="ECO:0000314"/>
    <property type="project" value="FlyBase"/>
</dbReference>
<dbReference type="GO" id="GO:0007614">
    <property type="term" value="P:short-term memory"/>
    <property type="evidence" value="ECO:0000315"/>
    <property type="project" value="FlyBase"/>
</dbReference>
<dbReference type="CDD" id="cd00038">
    <property type="entry name" value="CAP_ED"/>
    <property type="match status" value="2"/>
</dbReference>
<dbReference type="CDD" id="cd12085">
    <property type="entry name" value="DD_cGKI-alpha"/>
    <property type="match status" value="1"/>
</dbReference>
<dbReference type="CDD" id="cd05572">
    <property type="entry name" value="STKc_cGK"/>
    <property type="match status" value="1"/>
</dbReference>
<dbReference type="FunFam" id="1.10.510.10:FF:000096">
    <property type="entry name" value="cGMP-dependent protein kinase"/>
    <property type="match status" value="1"/>
</dbReference>
<dbReference type="FunFam" id="2.60.120.10:FF:000035">
    <property type="entry name" value="cGMP-dependent protein kinase"/>
    <property type="match status" value="1"/>
</dbReference>
<dbReference type="FunFam" id="1.20.5.490:FF:000006">
    <property type="entry name" value="cGMP-dependent protein kinase 1"/>
    <property type="match status" value="1"/>
</dbReference>
<dbReference type="FunFam" id="2.60.120.10:FF:000064">
    <property type="entry name" value="cGMP-dependent protein kinase, isozyme"/>
    <property type="match status" value="1"/>
</dbReference>
<dbReference type="Gene3D" id="2.60.120.10">
    <property type="entry name" value="Jelly Rolls"/>
    <property type="match status" value="2"/>
</dbReference>
<dbReference type="Gene3D" id="3.30.200.20">
    <property type="entry name" value="Phosphorylase Kinase, domain 1"/>
    <property type="match status" value="1"/>
</dbReference>
<dbReference type="Gene3D" id="1.20.5.490">
    <property type="entry name" value="Single helix bin"/>
    <property type="match status" value="1"/>
</dbReference>
<dbReference type="Gene3D" id="1.10.510.10">
    <property type="entry name" value="Transferase(Phosphotransferase) domain 1"/>
    <property type="match status" value="1"/>
</dbReference>
<dbReference type="InterPro" id="IPR000961">
    <property type="entry name" value="AGC-kinase_C"/>
</dbReference>
<dbReference type="InterPro" id="IPR002374">
    <property type="entry name" value="cGMP_dep_kinase"/>
</dbReference>
<dbReference type="InterPro" id="IPR018488">
    <property type="entry name" value="cNMP-bd_CS"/>
</dbReference>
<dbReference type="InterPro" id="IPR000595">
    <property type="entry name" value="cNMP-bd_dom"/>
</dbReference>
<dbReference type="InterPro" id="IPR018490">
    <property type="entry name" value="cNMP-bd_dom_sf"/>
</dbReference>
<dbReference type="InterPro" id="IPR011009">
    <property type="entry name" value="Kinase-like_dom_sf"/>
</dbReference>
<dbReference type="InterPro" id="IPR000719">
    <property type="entry name" value="Prot_kinase_dom"/>
</dbReference>
<dbReference type="InterPro" id="IPR017441">
    <property type="entry name" value="Protein_kinase_ATP_BS"/>
</dbReference>
<dbReference type="InterPro" id="IPR014710">
    <property type="entry name" value="RmlC-like_jellyroll"/>
</dbReference>
<dbReference type="InterPro" id="IPR008271">
    <property type="entry name" value="Ser/Thr_kinase_AS"/>
</dbReference>
<dbReference type="InterPro" id="IPR035014">
    <property type="entry name" value="STKc_cGK"/>
</dbReference>
<dbReference type="PANTHER" id="PTHR24353:SF111">
    <property type="match status" value="1"/>
</dbReference>
<dbReference type="PANTHER" id="PTHR24353">
    <property type="entry name" value="CYCLIC NUCLEOTIDE-DEPENDENT PROTEIN KINASE"/>
    <property type="match status" value="1"/>
</dbReference>
<dbReference type="Pfam" id="PF00027">
    <property type="entry name" value="cNMP_binding"/>
    <property type="match status" value="2"/>
</dbReference>
<dbReference type="Pfam" id="PF00069">
    <property type="entry name" value="Pkinase"/>
    <property type="match status" value="1"/>
</dbReference>
<dbReference type="PRINTS" id="PR00104">
    <property type="entry name" value="CGMPKINASE"/>
</dbReference>
<dbReference type="SMART" id="SM00100">
    <property type="entry name" value="cNMP"/>
    <property type="match status" value="2"/>
</dbReference>
<dbReference type="SMART" id="SM00133">
    <property type="entry name" value="S_TK_X"/>
    <property type="match status" value="1"/>
</dbReference>
<dbReference type="SMART" id="SM00220">
    <property type="entry name" value="S_TKc"/>
    <property type="match status" value="1"/>
</dbReference>
<dbReference type="SUPFAM" id="SSF51206">
    <property type="entry name" value="cAMP-binding domain-like"/>
    <property type="match status" value="2"/>
</dbReference>
<dbReference type="SUPFAM" id="SSF56112">
    <property type="entry name" value="Protein kinase-like (PK-like)"/>
    <property type="match status" value="1"/>
</dbReference>
<dbReference type="PROSITE" id="PS51285">
    <property type="entry name" value="AGC_KINASE_CTER"/>
    <property type="match status" value="1"/>
</dbReference>
<dbReference type="PROSITE" id="PS00888">
    <property type="entry name" value="CNMP_BINDING_1"/>
    <property type="match status" value="2"/>
</dbReference>
<dbReference type="PROSITE" id="PS00889">
    <property type="entry name" value="CNMP_BINDING_2"/>
    <property type="match status" value="2"/>
</dbReference>
<dbReference type="PROSITE" id="PS50042">
    <property type="entry name" value="CNMP_BINDING_3"/>
    <property type="match status" value="2"/>
</dbReference>
<dbReference type="PROSITE" id="PS00107">
    <property type="entry name" value="PROTEIN_KINASE_ATP"/>
    <property type="match status" value="1"/>
</dbReference>
<dbReference type="PROSITE" id="PS50011">
    <property type="entry name" value="PROTEIN_KINASE_DOM"/>
    <property type="match status" value="1"/>
</dbReference>
<dbReference type="PROSITE" id="PS00108">
    <property type="entry name" value="PROTEIN_KINASE_ST"/>
    <property type="match status" value="1"/>
</dbReference>
<accession>Q03043</accession>
<accession>A4V042</accession>
<accession>Q24304</accession>
<accession>Q9I7Q1</accession>
<accession>Q9VQT2</accession>
<evidence type="ECO:0000250" key="1"/>
<evidence type="ECO:0000250" key="2">
    <source>
        <dbReference type="UniProtKB" id="Q13976"/>
    </source>
</evidence>
<evidence type="ECO:0000255" key="3">
    <source>
        <dbReference type="PROSITE-ProRule" id="PRU00159"/>
    </source>
</evidence>
<evidence type="ECO:0000255" key="4">
    <source>
        <dbReference type="PROSITE-ProRule" id="PRU00618"/>
    </source>
</evidence>
<evidence type="ECO:0000255" key="5">
    <source>
        <dbReference type="PROSITE-ProRule" id="PRU10027"/>
    </source>
</evidence>
<evidence type="ECO:0000256" key="6">
    <source>
        <dbReference type="SAM" id="MobiDB-lite"/>
    </source>
</evidence>
<evidence type="ECO:0000269" key="7">
    <source>
    </source>
</evidence>
<evidence type="ECO:0000269" key="8">
    <source>
    </source>
</evidence>
<evidence type="ECO:0000303" key="9">
    <source>
    </source>
</evidence>
<evidence type="ECO:0000305" key="10"/>
<feature type="chain" id="PRO_0000086121" description="cGMP-dependent protein kinase, isozyme 2 forms cD4/T1/T3A/T3B">
    <location>
        <begin position="1"/>
        <end position="1088"/>
    </location>
</feature>
<feature type="domain" description="Protein kinase" evidence="3">
    <location>
        <begin position="777"/>
        <end position="1036"/>
    </location>
</feature>
<feature type="domain" description="AGC-kinase C-terminal" evidence="4">
    <location>
        <begin position="1037"/>
        <end position="1088"/>
    </location>
</feature>
<feature type="region of interest" description="Dimerization" evidence="1">
    <location>
        <begin position="1"/>
        <end position="69"/>
    </location>
</feature>
<feature type="region of interest" description="Disordered" evidence="6">
    <location>
        <begin position="15"/>
        <end position="39"/>
    </location>
</feature>
<feature type="region of interest" description="Regulatory" evidence="1">
    <location>
        <begin position="70"/>
        <end position="528"/>
    </location>
</feature>
<feature type="region of interest" description="Disordered" evidence="6">
    <location>
        <begin position="128"/>
        <end position="158"/>
    </location>
</feature>
<feature type="region of interest" description="Disordered" evidence="6">
    <location>
        <begin position="191"/>
        <end position="211"/>
    </location>
</feature>
<feature type="region of interest" description="Disordered" evidence="6">
    <location>
        <begin position="305"/>
        <end position="336"/>
    </location>
</feature>
<feature type="region of interest" description="Disordered" evidence="6">
    <location>
        <begin position="441"/>
        <end position="477"/>
    </location>
</feature>
<feature type="region of interest" description="Disordered" evidence="6">
    <location>
        <begin position="1064"/>
        <end position="1088"/>
    </location>
</feature>
<feature type="compositionally biased region" description="Polar residues" evidence="6">
    <location>
        <begin position="15"/>
        <end position="28"/>
    </location>
</feature>
<feature type="compositionally biased region" description="Basic and acidic residues" evidence="6">
    <location>
        <begin position="144"/>
        <end position="157"/>
    </location>
</feature>
<feature type="compositionally biased region" description="Gly residues" evidence="6">
    <location>
        <begin position="441"/>
        <end position="461"/>
    </location>
</feature>
<feature type="active site" description="Proton acceptor" evidence="3 5">
    <location>
        <position position="901"/>
    </location>
</feature>
<feature type="binding site" evidence="2">
    <location>
        <begin position="584"/>
        <end position="587"/>
    </location>
    <ligand>
        <name>3',5'-cyclic GMP</name>
        <dbReference type="ChEBI" id="CHEBI:57746"/>
        <label>1</label>
    </ligand>
</feature>
<feature type="binding site" evidence="2">
    <location>
        <begin position="594"/>
        <end position="595"/>
    </location>
    <ligand>
        <name>3',5'-cyclic GMP</name>
        <dbReference type="ChEBI" id="CHEBI:57746"/>
        <label>1</label>
    </ligand>
</feature>
<feature type="binding site" evidence="2">
    <location>
        <position position="699"/>
    </location>
    <ligand>
        <name>3',5'-cyclic GMP</name>
        <dbReference type="ChEBI" id="CHEBI:57746"/>
        <label>2</label>
    </ligand>
</feature>
<feature type="binding site" evidence="2">
    <location>
        <begin position="708"/>
        <end position="711"/>
    </location>
    <ligand>
        <name>3',5'-cyclic GMP</name>
        <dbReference type="ChEBI" id="CHEBI:57746"/>
        <label>2</label>
    </ligand>
</feature>
<feature type="binding site" evidence="2">
    <location>
        <begin position="718"/>
        <end position="719"/>
    </location>
    <ligand>
        <name>3',5'-cyclic GMP</name>
        <dbReference type="ChEBI" id="CHEBI:57746"/>
        <label>2</label>
    </ligand>
</feature>
<feature type="binding site" evidence="3">
    <location>
        <begin position="783"/>
        <end position="791"/>
    </location>
    <ligand>
        <name>ATP</name>
        <dbReference type="ChEBI" id="CHEBI:30616"/>
    </ligand>
</feature>
<feature type="binding site" evidence="3">
    <location>
        <position position="807"/>
    </location>
    <ligand>
        <name>ATP</name>
        <dbReference type="ChEBI" id="CHEBI:30616"/>
    </ligand>
</feature>
<feature type="modified residue" description="Phosphothreonine" evidence="7">
    <location>
        <position position="934"/>
    </location>
</feature>
<feature type="modified residue" description="Phosphothreonine" evidence="7">
    <location>
        <position position="938"/>
    </location>
</feature>
<feature type="splice variant" id="VSP_004763" description="In isoform cD4." evidence="10">
    <location>
        <begin position="1"/>
        <end position="520"/>
    </location>
</feature>
<feature type="splice variant" id="VSP_004762" description="In isoform T3B." evidence="9">
    <location>
        <begin position="1"/>
        <end position="346"/>
    </location>
</feature>
<feature type="splice variant" id="VSP_004761" description="In isoform T3A." evidence="10">
    <location>
        <begin position="1"/>
        <end position="169"/>
    </location>
</feature>
<feature type="sequence conflict" description="In Ref. 1; AAA28455." evidence="10" ref="1">
    <original>P</original>
    <variation>T</variation>
    <location>
        <position position="49"/>
    </location>
</feature>
<feature type="sequence conflict" description="In Ref. 1; AAA28455." evidence="10" ref="1">
    <original>S</original>
    <variation>T</variation>
    <location>
        <position position="207"/>
    </location>
</feature>
<feature type="sequence conflict" description="In Ref. 1; AAA28455/AAA28459." evidence="10" ref="1">
    <original>Y</original>
    <variation>H</variation>
    <location>
        <position position="664"/>
    </location>
</feature>
<feature type="sequence conflict" description="In Ref. 1; AAA28455/AAA28459." evidence="10" ref="1">
    <original>T</original>
    <variation>R</variation>
    <location>
        <position position="692"/>
    </location>
</feature>
<feature type="sequence conflict" description="In Ref. 1; AAA28455/AAA28459." evidence="10" ref="1">
    <original>V</original>
    <variation>G</variation>
    <location>
        <position position="915"/>
    </location>
</feature>
<comment type="catalytic activity">
    <reaction>
        <text>L-seryl-[protein] + ATP = O-phospho-L-seryl-[protein] + ADP + H(+)</text>
        <dbReference type="Rhea" id="RHEA:17989"/>
        <dbReference type="Rhea" id="RHEA-COMP:9863"/>
        <dbReference type="Rhea" id="RHEA-COMP:11604"/>
        <dbReference type="ChEBI" id="CHEBI:15378"/>
        <dbReference type="ChEBI" id="CHEBI:29999"/>
        <dbReference type="ChEBI" id="CHEBI:30616"/>
        <dbReference type="ChEBI" id="CHEBI:83421"/>
        <dbReference type="ChEBI" id="CHEBI:456216"/>
        <dbReference type="EC" id="2.7.11.12"/>
    </reaction>
</comment>
<comment type="catalytic activity">
    <reaction>
        <text>L-threonyl-[protein] + ATP = O-phospho-L-threonyl-[protein] + ADP + H(+)</text>
        <dbReference type="Rhea" id="RHEA:46608"/>
        <dbReference type="Rhea" id="RHEA-COMP:11060"/>
        <dbReference type="Rhea" id="RHEA-COMP:11605"/>
        <dbReference type="ChEBI" id="CHEBI:15378"/>
        <dbReference type="ChEBI" id="CHEBI:30013"/>
        <dbReference type="ChEBI" id="CHEBI:30616"/>
        <dbReference type="ChEBI" id="CHEBI:61977"/>
        <dbReference type="ChEBI" id="CHEBI:456216"/>
        <dbReference type="EC" id="2.7.11.12"/>
    </reaction>
</comment>
<comment type="alternative products">
    <event type="alternative splicing"/>
    <isoform>
        <id>Q03043-1</id>
        <name>T1</name>
        <name>A</name>
        <name>H</name>
        <sequence type="displayed"/>
    </isoform>
    <isoform>
        <id>Q03043-4</id>
        <name>cD4</name>
        <sequence type="described" ref="VSP_004763"/>
    </isoform>
    <isoform>
        <id>Q03043-2</id>
        <name>T3A</name>
        <sequence type="described" ref="VSP_004761"/>
    </isoform>
    <isoform>
        <id>Q03043-3</id>
        <name>T3B</name>
        <name>B</name>
        <sequence type="described" ref="VSP_004762"/>
    </isoform>
    <isoform>
        <id>P32023-1</id>
        <name>cD5</name>
        <name>E</name>
        <name>J</name>
        <sequence type="external"/>
    </isoform>
    <isoform>
        <id>P32023-2</id>
        <name>T2</name>
        <name>C</name>
        <name>D</name>
        <name>G</name>
        <name>T2a</name>
        <name>T2b</name>
        <sequence type="external"/>
    </isoform>
</comment>
<comment type="developmental stage">
    <text evidence="8">Expressed throughout development, high during embryonic and adult stages. Isoform T1 is predominantly expressed during embryo and adult stages.</text>
</comment>
<comment type="similarity">
    <text evidence="10">Belongs to the protein kinase superfamily. AGC Ser/Thr protein kinase family. cGMP subfamily.</text>
</comment>
<organism>
    <name type="scientific">Drosophila melanogaster</name>
    <name type="common">Fruit fly</name>
    <dbReference type="NCBI Taxonomy" id="7227"/>
    <lineage>
        <taxon>Eukaryota</taxon>
        <taxon>Metazoa</taxon>
        <taxon>Ecdysozoa</taxon>
        <taxon>Arthropoda</taxon>
        <taxon>Hexapoda</taxon>
        <taxon>Insecta</taxon>
        <taxon>Pterygota</taxon>
        <taxon>Neoptera</taxon>
        <taxon>Endopterygota</taxon>
        <taxon>Diptera</taxon>
        <taxon>Brachycera</taxon>
        <taxon>Muscomorpha</taxon>
        <taxon>Ephydroidea</taxon>
        <taxon>Drosophilidae</taxon>
        <taxon>Drosophila</taxon>
        <taxon>Sophophora</taxon>
    </lineage>
</organism>
<name>KGP24_DROME</name>
<keyword id="KW-0025">Alternative splicing</keyword>
<keyword id="KW-0067">ATP-binding</keyword>
<keyword id="KW-0140">cGMP</keyword>
<keyword id="KW-0142">cGMP-binding</keyword>
<keyword id="KW-0418">Kinase</keyword>
<keyword id="KW-0547">Nucleotide-binding</keyword>
<keyword id="KW-0597">Phosphoprotein</keyword>
<keyword id="KW-1185">Reference proteome</keyword>
<keyword id="KW-0723">Serine/threonine-protein kinase</keyword>
<keyword id="KW-0808">Transferase</keyword>
<gene>
    <name type="primary">for</name>
    <name type="synonym">DG2</name>
    <name type="synonym">PGK2</name>
    <name type="synonym">Pkg24A</name>
    <name type="ORF">CG10033</name>
</gene>